<reference evidence="6" key="1">
    <citation type="journal article" date="2002" name="Nature">
        <title>Genome sequence of the human malaria parasite Plasmodium falciparum.</title>
        <authorList>
            <person name="Gardner M.J."/>
            <person name="Hall N."/>
            <person name="Fung E."/>
            <person name="White O."/>
            <person name="Berriman M."/>
            <person name="Hyman R.W."/>
            <person name="Carlton J.M."/>
            <person name="Pain A."/>
            <person name="Nelson K.E."/>
            <person name="Bowman S."/>
            <person name="Paulsen I.T."/>
            <person name="James K.D."/>
            <person name="Eisen J.A."/>
            <person name="Rutherford K.M."/>
            <person name="Salzberg S.L."/>
            <person name="Craig A."/>
            <person name="Kyes S."/>
            <person name="Chan M.-S."/>
            <person name="Nene V."/>
            <person name="Shallom S.J."/>
            <person name="Suh B."/>
            <person name="Peterson J."/>
            <person name="Angiuoli S."/>
            <person name="Pertea M."/>
            <person name="Allen J."/>
            <person name="Selengut J."/>
            <person name="Haft D."/>
            <person name="Mather M.W."/>
            <person name="Vaidya A.B."/>
            <person name="Martin D.M.A."/>
            <person name="Fairlamb A.H."/>
            <person name="Fraunholz M.J."/>
            <person name="Roos D.S."/>
            <person name="Ralph S.A."/>
            <person name="McFadden G.I."/>
            <person name="Cummings L.M."/>
            <person name="Subramanian G.M."/>
            <person name="Mungall C."/>
            <person name="Venter J.C."/>
            <person name="Carucci D.J."/>
            <person name="Hoffman S.L."/>
            <person name="Newbold C."/>
            <person name="Davis R.W."/>
            <person name="Fraser C.M."/>
            <person name="Barrell B.G."/>
        </authorList>
    </citation>
    <scope>NUCLEOTIDE SEQUENCE [LARGE SCALE GENOMIC DNA]</scope>
    <source>
        <strain evidence="6">3D7</strain>
    </source>
</reference>
<reference evidence="4" key="2">
    <citation type="journal article" date="2019" name="Cell. Microbiol.">
        <title>An essential pentatricopeptide repeat protein in the apicomplexan remnant chloroplast.</title>
        <authorList>
            <person name="Hicks J.L."/>
            <person name="Lassadi I."/>
            <person name="Carpenter E.F."/>
            <person name="Eno M."/>
            <person name="Vardakis A."/>
            <person name="Waller R.F."/>
            <person name="Howe C.J."/>
            <person name="Nisbet R.E.R."/>
        </authorList>
    </citation>
    <scope>FUNCTION</scope>
    <scope>SUBUNIT</scope>
    <scope>SUBCELLULAR LOCATION</scope>
</reference>
<keyword id="KW-0933">Apicoplast</keyword>
<keyword id="KW-0934">Plastid</keyword>
<keyword id="KW-1185">Reference proteome</keyword>
<keyword id="KW-0677">Repeat</keyword>
<keyword id="KW-0694">RNA-binding</keyword>
<keyword id="KW-0809">Transit peptide</keyword>
<feature type="transit peptide" description="Apicoplast">
    <location>
        <begin position="1"/>
        <end status="unknown"/>
    </location>
</feature>
<feature type="chain" id="PRO_0000454231" description="Pentatricopeptide repeat-containing protein 1, apicoplast">
    <location>
        <begin status="unknown"/>
        <end position="608"/>
    </location>
</feature>
<feature type="repeat" description="PPR 1" evidence="1">
    <location>
        <begin position="165"/>
        <end position="199"/>
    </location>
</feature>
<feature type="repeat" description="PPR 2" evidence="1">
    <location>
        <begin position="200"/>
        <end position="230"/>
    </location>
</feature>
<feature type="repeat" description="PPR 3" evidence="1">
    <location>
        <begin position="236"/>
        <end position="270"/>
    </location>
</feature>
<feature type="repeat" description="PPR 4" evidence="1">
    <location>
        <begin position="336"/>
        <end position="370"/>
    </location>
</feature>
<feature type="repeat" description="PPR 5" evidence="1">
    <location>
        <begin position="372"/>
        <end position="402"/>
    </location>
</feature>
<feature type="repeat" description="PPR 6" evidence="1">
    <location>
        <begin position="410"/>
        <end position="445"/>
    </location>
</feature>
<feature type="repeat" description="PPR 7" evidence="1">
    <location>
        <begin position="446"/>
        <end position="480"/>
    </location>
</feature>
<protein>
    <recommendedName>
        <fullName evidence="3">Pentatricopeptide repeat-containing protein 1, apicoplast</fullName>
        <shortName evidence="3">PfPPR1</shortName>
    </recommendedName>
</protein>
<sequence length="608" mass="71529">MKLTYYYYAFCIIKVIASLRLDSYKKQNVFFLKAFFKNVINIKKERKKNLVNSFFYVGRRNKIPIKYSNNEFYNIHNENYDNTKYYNNNNNTNDYDKKDNNVGKRKYSRKNMLYMNSSEKDNFLNENILKKKSSEKEIEQSLTPLNMDWVKVMNLIYSSNDIDATTLAFNAAMSAVEKKGCLSTMLDLIGTMKSKNIKPDLVSYKLVLSLCDKYHLVDTAEILFEEMIESDKINPNYEIYAIMISCYAKTGNGYKAIELFEKLRNDPFVEEMRSLNITNTNDNKENSNDLQTSIIHNNMEDNNNNNNNNDNNIYDDKFKHISNKIKNVENCSGKIQYSEYANVIYACNISNLYEQGIKYFEELLKSGKYMPSIFVFENIFDLLSKNGDYEKSLEYYNNLKNDPNFKKNINVNILNNLLKALSIHNKINVAEDIWNNEFDELLLTPNNLSYQILLKIYSHIDNYEKAFKLFKEMQVNKLLNNKNILPFIYTIESTKNCGIYNYAIYVLRVAKLLNFKANDLLMLYNNTMISCINSKKYDVIISLYAELINMQQKDTSFQININTLTFVLLAFKELNMKQDFINLKNIIIQRNYKLPPLCSKIFSETENY</sequence>
<evidence type="ECO:0000255" key="1">
    <source>
        <dbReference type="PROSITE-ProRule" id="PRU00708"/>
    </source>
</evidence>
<evidence type="ECO:0000269" key="2">
    <source>
    </source>
</evidence>
<evidence type="ECO:0000303" key="3">
    <source>
    </source>
</evidence>
<evidence type="ECO:0000305" key="4"/>
<evidence type="ECO:0000312" key="5">
    <source>
        <dbReference type="EMBL" id="CZT99771.1"/>
    </source>
</evidence>
<evidence type="ECO:0000312" key="6">
    <source>
        <dbReference type="Proteomes" id="UP000001450"/>
    </source>
</evidence>
<proteinExistence type="evidence at protein level"/>
<organism evidence="6">
    <name type="scientific">Plasmodium falciparum (isolate 3D7)</name>
    <dbReference type="NCBI Taxonomy" id="36329"/>
    <lineage>
        <taxon>Eukaryota</taxon>
        <taxon>Sar</taxon>
        <taxon>Alveolata</taxon>
        <taxon>Apicomplexa</taxon>
        <taxon>Aconoidasida</taxon>
        <taxon>Haemosporida</taxon>
        <taxon>Plasmodiidae</taxon>
        <taxon>Plasmodium</taxon>
        <taxon>Plasmodium (Laverania)</taxon>
    </lineage>
</organism>
<gene>
    <name evidence="3" type="primary">PPR1</name>
    <name evidence="5" type="ORF">PF3D7_1406400</name>
</gene>
<dbReference type="EMBL" id="LN999946">
    <property type="protein sequence ID" value="CZT99771.1"/>
    <property type="molecule type" value="Genomic_DNA"/>
</dbReference>
<dbReference type="RefSeq" id="XP_001348234.1">
    <property type="nucleotide sequence ID" value="XM_001348198.1"/>
</dbReference>
<dbReference type="SMR" id="Q8IM30"/>
<dbReference type="STRING" id="36329.Q8IM30"/>
<dbReference type="PaxDb" id="5833-PF14_0061"/>
<dbReference type="EnsemblProtists" id="CZT99771">
    <property type="protein sequence ID" value="CZT99771"/>
    <property type="gene ID" value="PF3D7_1406400"/>
</dbReference>
<dbReference type="GeneID" id="811643"/>
<dbReference type="KEGG" id="pfa:PF3D7_1406400"/>
<dbReference type="VEuPathDB" id="PlasmoDB:PF3D7_1406400"/>
<dbReference type="HOGENOM" id="CLU_432466_0_0_1"/>
<dbReference type="InParanoid" id="Q8IM30"/>
<dbReference type="OMA" id="VIFACNM"/>
<dbReference type="OrthoDB" id="440666at2759"/>
<dbReference type="PhylomeDB" id="Q8IM30"/>
<dbReference type="Proteomes" id="UP000001450">
    <property type="component" value="Chromosome 14"/>
</dbReference>
<dbReference type="GO" id="GO:0020011">
    <property type="term" value="C:apicoplast"/>
    <property type="evidence" value="ECO:0000314"/>
    <property type="project" value="UniProtKB"/>
</dbReference>
<dbReference type="GO" id="GO:0003729">
    <property type="term" value="F:mRNA binding"/>
    <property type="evidence" value="ECO:0000318"/>
    <property type="project" value="GO_Central"/>
</dbReference>
<dbReference type="GO" id="GO:0003723">
    <property type="term" value="F:RNA binding"/>
    <property type="evidence" value="ECO:0000314"/>
    <property type="project" value="UniProtKB"/>
</dbReference>
<dbReference type="Gene3D" id="1.25.40.10">
    <property type="entry name" value="Tetratricopeptide repeat domain"/>
    <property type="match status" value="2"/>
</dbReference>
<dbReference type="InterPro" id="IPR002885">
    <property type="entry name" value="Pentatricopeptide_rpt"/>
</dbReference>
<dbReference type="InterPro" id="IPR011990">
    <property type="entry name" value="TPR-like_helical_dom_sf"/>
</dbReference>
<dbReference type="NCBIfam" id="TIGR00756">
    <property type="entry name" value="PPR"/>
    <property type="match status" value="2"/>
</dbReference>
<dbReference type="PANTHER" id="PTHR47447">
    <property type="entry name" value="OS03G0856100 PROTEIN"/>
    <property type="match status" value="1"/>
</dbReference>
<dbReference type="PANTHER" id="PTHR47447:SF17">
    <property type="entry name" value="OS12G0638900 PROTEIN"/>
    <property type="match status" value="1"/>
</dbReference>
<dbReference type="Pfam" id="PF01535">
    <property type="entry name" value="PPR"/>
    <property type="match status" value="2"/>
</dbReference>
<dbReference type="PROSITE" id="PS51375">
    <property type="entry name" value="PPR"/>
    <property type="match status" value="7"/>
</dbReference>
<comment type="function">
    <text evidence="2">Binds to apicoplast RNA transcripts, preferentially to the motif UUAU, and protects RNA transcripts from degradation by ribonuclease.</text>
</comment>
<comment type="subunit">
    <text evidence="2">Homodimer.</text>
</comment>
<comment type="subcellular location">
    <subcellularLocation>
        <location evidence="2">Plastid</location>
        <location evidence="2">Apicoplast</location>
    </subcellularLocation>
</comment>
<comment type="similarity">
    <text evidence="4">Belongs to the PPR family. P subfamily.</text>
</comment>
<name>PPR1_PLAF7</name>
<accession>Q8IM30</accession>